<evidence type="ECO:0000250" key="1"/>
<evidence type="ECO:0000255" key="2"/>
<evidence type="ECO:0000305" key="3"/>
<accession>Q9SAE3</accession>
<dbReference type="EC" id="1.14.-.-"/>
<dbReference type="EMBL" id="AC007357">
    <property type="protein sequence ID" value="AAD31062.1"/>
    <property type="molecule type" value="Genomic_DNA"/>
</dbReference>
<dbReference type="EMBL" id="CP002684">
    <property type="protein sequence ID" value="ANM58391.1"/>
    <property type="molecule type" value="Genomic_DNA"/>
</dbReference>
<dbReference type="EMBL" id="AF325097">
    <property type="protein sequence ID" value="AAK17165.1"/>
    <property type="molecule type" value="mRNA"/>
</dbReference>
<dbReference type="EMBL" id="AY062833">
    <property type="protein sequence ID" value="AAL32911.1"/>
    <property type="molecule type" value="mRNA"/>
</dbReference>
<dbReference type="EMBL" id="AY128747">
    <property type="protein sequence ID" value="AAM91147.1"/>
    <property type="molecule type" value="mRNA"/>
</dbReference>
<dbReference type="PIR" id="A86265">
    <property type="entry name" value="A86265"/>
</dbReference>
<dbReference type="RefSeq" id="NP_172768.1">
    <property type="nucleotide sequence ID" value="NM_101179.3"/>
</dbReference>
<dbReference type="SMR" id="Q9SAE3"/>
<dbReference type="FunCoup" id="Q9SAE3">
    <property type="interactions" value="325"/>
</dbReference>
<dbReference type="STRING" id="3702.Q9SAE3"/>
<dbReference type="PaxDb" id="3702-AT1G13090.1"/>
<dbReference type="ProteomicsDB" id="240268"/>
<dbReference type="EnsemblPlants" id="AT1G13090.2">
    <property type="protein sequence ID" value="AT1G13090.2"/>
    <property type="gene ID" value="AT1G13090"/>
</dbReference>
<dbReference type="GeneID" id="837866"/>
<dbReference type="Gramene" id="AT1G13090.2">
    <property type="protein sequence ID" value="AT1G13090.2"/>
    <property type="gene ID" value="AT1G13090"/>
</dbReference>
<dbReference type="KEGG" id="ath:AT1G13090"/>
<dbReference type="Araport" id="AT1G13090"/>
<dbReference type="TAIR" id="AT1G13090">
    <property type="gene designation" value="CYP71B28"/>
</dbReference>
<dbReference type="eggNOG" id="KOG0156">
    <property type="taxonomic scope" value="Eukaryota"/>
</dbReference>
<dbReference type="HOGENOM" id="CLU_001570_4_1_1"/>
<dbReference type="InParanoid" id="Q9SAE3"/>
<dbReference type="OMA" id="RVAMSHI"/>
<dbReference type="OrthoDB" id="1055148at2759"/>
<dbReference type="PhylomeDB" id="Q9SAE3"/>
<dbReference type="PRO" id="PR:Q9SAE3"/>
<dbReference type="Proteomes" id="UP000006548">
    <property type="component" value="Chromosome 1"/>
</dbReference>
<dbReference type="ExpressionAtlas" id="Q9SAE3">
    <property type="expression patterns" value="baseline and differential"/>
</dbReference>
<dbReference type="GO" id="GO:0005576">
    <property type="term" value="C:extracellular region"/>
    <property type="evidence" value="ECO:0007005"/>
    <property type="project" value="TAIR"/>
</dbReference>
<dbReference type="GO" id="GO:0016020">
    <property type="term" value="C:membrane"/>
    <property type="evidence" value="ECO:0007669"/>
    <property type="project" value="UniProtKB-SubCell"/>
</dbReference>
<dbReference type="GO" id="GO:0020037">
    <property type="term" value="F:heme binding"/>
    <property type="evidence" value="ECO:0007669"/>
    <property type="project" value="InterPro"/>
</dbReference>
<dbReference type="GO" id="GO:0005506">
    <property type="term" value="F:iron ion binding"/>
    <property type="evidence" value="ECO:0007669"/>
    <property type="project" value="InterPro"/>
</dbReference>
<dbReference type="GO" id="GO:0004497">
    <property type="term" value="F:monooxygenase activity"/>
    <property type="evidence" value="ECO:0007669"/>
    <property type="project" value="UniProtKB-KW"/>
</dbReference>
<dbReference type="GO" id="GO:0016705">
    <property type="term" value="F:oxidoreductase activity, acting on paired donors, with incorporation or reduction of molecular oxygen"/>
    <property type="evidence" value="ECO:0007669"/>
    <property type="project" value="InterPro"/>
</dbReference>
<dbReference type="CDD" id="cd11072">
    <property type="entry name" value="CYP71-like"/>
    <property type="match status" value="1"/>
</dbReference>
<dbReference type="FunFam" id="1.10.630.10:FF:000011">
    <property type="entry name" value="Cytochrome P450 83B1"/>
    <property type="match status" value="1"/>
</dbReference>
<dbReference type="Gene3D" id="1.10.630.10">
    <property type="entry name" value="Cytochrome P450"/>
    <property type="match status" value="1"/>
</dbReference>
<dbReference type="InterPro" id="IPR001128">
    <property type="entry name" value="Cyt_P450"/>
</dbReference>
<dbReference type="InterPro" id="IPR017972">
    <property type="entry name" value="Cyt_P450_CS"/>
</dbReference>
<dbReference type="InterPro" id="IPR002401">
    <property type="entry name" value="Cyt_P450_E_grp-I"/>
</dbReference>
<dbReference type="InterPro" id="IPR036396">
    <property type="entry name" value="Cyt_P450_sf"/>
</dbReference>
<dbReference type="InterPro" id="IPR050193">
    <property type="entry name" value="Cytochrome_P450_71"/>
</dbReference>
<dbReference type="PANTHER" id="PTHR47956:SF50">
    <property type="entry name" value="BIFUNCTIONAL DIHYDROCAMALEXATE SYNTHASE_CAMALEXIN SYNTHASE-RELATED"/>
    <property type="match status" value="1"/>
</dbReference>
<dbReference type="PANTHER" id="PTHR47956">
    <property type="entry name" value="CYTOCHROME P450 71B11-RELATED"/>
    <property type="match status" value="1"/>
</dbReference>
<dbReference type="Pfam" id="PF00067">
    <property type="entry name" value="p450"/>
    <property type="match status" value="1"/>
</dbReference>
<dbReference type="PRINTS" id="PR00463">
    <property type="entry name" value="EP450I"/>
</dbReference>
<dbReference type="PRINTS" id="PR00385">
    <property type="entry name" value="P450"/>
</dbReference>
<dbReference type="SUPFAM" id="SSF48264">
    <property type="entry name" value="Cytochrome P450"/>
    <property type="match status" value="1"/>
</dbReference>
<dbReference type="PROSITE" id="PS00086">
    <property type="entry name" value="CYTOCHROME_P450"/>
    <property type="match status" value="1"/>
</dbReference>
<feature type="chain" id="PRO_0000052105" description="Cytochrome P450 71B28">
    <location>
        <begin position="1"/>
        <end position="490"/>
    </location>
</feature>
<feature type="transmembrane region" description="Helical" evidence="2">
    <location>
        <begin position="1"/>
        <end position="21"/>
    </location>
</feature>
<feature type="binding site" description="axial binding residue" evidence="1">
    <location>
        <position position="440"/>
    </location>
    <ligand>
        <name>heme</name>
        <dbReference type="ChEBI" id="CHEBI:30413"/>
    </ligand>
    <ligandPart>
        <name>Fe</name>
        <dbReference type="ChEBI" id="CHEBI:18248"/>
    </ligandPart>
</feature>
<gene>
    <name type="primary">CYP71B28</name>
    <name type="ordered locus">At1g13090</name>
    <name type="ORF">F3F19.11</name>
</gene>
<name>C71BS_ARATH</name>
<proteinExistence type="evidence at transcript level"/>
<reference key="1">
    <citation type="journal article" date="2000" name="Nature">
        <title>Sequence and analysis of chromosome 1 of the plant Arabidopsis thaliana.</title>
        <authorList>
            <person name="Theologis A."/>
            <person name="Ecker J.R."/>
            <person name="Palm C.J."/>
            <person name="Federspiel N.A."/>
            <person name="Kaul S."/>
            <person name="White O."/>
            <person name="Alonso J."/>
            <person name="Altafi H."/>
            <person name="Araujo R."/>
            <person name="Bowman C.L."/>
            <person name="Brooks S.Y."/>
            <person name="Buehler E."/>
            <person name="Chan A."/>
            <person name="Chao Q."/>
            <person name="Chen H."/>
            <person name="Cheuk R.F."/>
            <person name="Chin C.W."/>
            <person name="Chung M.K."/>
            <person name="Conn L."/>
            <person name="Conway A.B."/>
            <person name="Conway A.R."/>
            <person name="Creasy T.H."/>
            <person name="Dewar K."/>
            <person name="Dunn P."/>
            <person name="Etgu P."/>
            <person name="Feldblyum T.V."/>
            <person name="Feng J.-D."/>
            <person name="Fong B."/>
            <person name="Fujii C.Y."/>
            <person name="Gill J.E."/>
            <person name="Goldsmith A.D."/>
            <person name="Haas B."/>
            <person name="Hansen N.F."/>
            <person name="Hughes B."/>
            <person name="Huizar L."/>
            <person name="Hunter J.L."/>
            <person name="Jenkins J."/>
            <person name="Johnson-Hopson C."/>
            <person name="Khan S."/>
            <person name="Khaykin E."/>
            <person name="Kim C.J."/>
            <person name="Koo H.L."/>
            <person name="Kremenetskaia I."/>
            <person name="Kurtz D.B."/>
            <person name="Kwan A."/>
            <person name="Lam B."/>
            <person name="Langin-Hooper S."/>
            <person name="Lee A."/>
            <person name="Lee J.M."/>
            <person name="Lenz C.A."/>
            <person name="Li J.H."/>
            <person name="Li Y.-P."/>
            <person name="Lin X."/>
            <person name="Liu S.X."/>
            <person name="Liu Z.A."/>
            <person name="Luros J.S."/>
            <person name="Maiti R."/>
            <person name="Marziali A."/>
            <person name="Militscher J."/>
            <person name="Miranda M."/>
            <person name="Nguyen M."/>
            <person name="Nierman W.C."/>
            <person name="Osborne B.I."/>
            <person name="Pai G."/>
            <person name="Peterson J."/>
            <person name="Pham P.K."/>
            <person name="Rizzo M."/>
            <person name="Rooney T."/>
            <person name="Rowley D."/>
            <person name="Sakano H."/>
            <person name="Salzberg S.L."/>
            <person name="Schwartz J.R."/>
            <person name="Shinn P."/>
            <person name="Southwick A.M."/>
            <person name="Sun H."/>
            <person name="Tallon L.J."/>
            <person name="Tambunga G."/>
            <person name="Toriumi M.J."/>
            <person name="Town C.D."/>
            <person name="Utterback T."/>
            <person name="Van Aken S."/>
            <person name="Vaysberg M."/>
            <person name="Vysotskaia V.S."/>
            <person name="Walker M."/>
            <person name="Wu D."/>
            <person name="Yu G."/>
            <person name="Fraser C.M."/>
            <person name="Venter J.C."/>
            <person name="Davis R.W."/>
        </authorList>
    </citation>
    <scope>NUCLEOTIDE SEQUENCE [LARGE SCALE GENOMIC DNA]</scope>
    <source>
        <strain>cv. Columbia</strain>
    </source>
</reference>
<reference key="2">
    <citation type="journal article" date="2017" name="Plant J.">
        <title>Araport11: a complete reannotation of the Arabidopsis thaliana reference genome.</title>
        <authorList>
            <person name="Cheng C.Y."/>
            <person name="Krishnakumar V."/>
            <person name="Chan A.P."/>
            <person name="Thibaud-Nissen F."/>
            <person name="Schobel S."/>
            <person name="Town C.D."/>
        </authorList>
    </citation>
    <scope>GENOME REANNOTATION</scope>
    <source>
        <strain>cv. Columbia</strain>
    </source>
</reference>
<reference key="3">
    <citation type="journal article" date="2003" name="Science">
        <title>Empirical analysis of transcriptional activity in the Arabidopsis genome.</title>
        <authorList>
            <person name="Yamada K."/>
            <person name="Lim J."/>
            <person name="Dale J.M."/>
            <person name="Chen H."/>
            <person name="Shinn P."/>
            <person name="Palm C.J."/>
            <person name="Southwick A.M."/>
            <person name="Wu H.C."/>
            <person name="Kim C.J."/>
            <person name="Nguyen M."/>
            <person name="Pham P.K."/>
            <person name="Cheuk R.F."/>
            <person name="Karlin-Newmann G."/>
            <person name="Liu S.X."/>
            <person name="Lam B."/>
            <person name="Sakano H."/>
            <person name="Wu T."/>
            <person name="Yu G."/>
            <person name="Miranda M."/>
            <person name="Quach H.L."/>
            <person name="Tripp M."/>
            <person name="Chang C.H."/>
            <person name="Lee J.M."/>
            <person name="Toriumi M.J."/>
            <person name="Chan M.M."/>
            <person name="Tang C.C."/>
            <person name="Onodera C.S."/>
            <person name="Deng J.M."/>
            <person name="Akiyama K."/>
            <person name="Ansari Y."/>
            <person name="Arakawa T."/>
            <person name="Banh J."/>
            <person name="Banno F."/>
            <person name="Bowser L."/>
            <person name="Brooks S.Y."/>
            <person name="Carninci P."/>
            <person name="Chao Q."/>
            <person name="Choy N."/>
            <person name="Enju A."/>
            <person name="Goldsmith A.D."/>
            <person name="Gurjal M."/>
            <person name="Hansen N.F."/>
            <person name="Hayashizaki Y."/>
            <person name="Johnson-Hopson C."/>
            <person name="Hsuan V.W."/>
            <person name="Iida K."/>
            <person name="Karnes M."/>
            <person name="Khan S."/>
            <person name="Koesema E."/>
            <person name="Ishida J."/>
            <person name="Jiang P.X."/>
            <person name="Jones T."/>
            <person name="Kawai J."/>
            <person name="Kamiya A."/>
            <person name="Meyers C."/>
            <person name="Nakajima M."/>
            <person name="Narusaka M."/>
            <person name="Seki M."/>
            <person name="Sakurai T."/>
            <person name="Satou M."/>
            <person name="Tamse R."/>
            <person name="Vaysberg M."/>
            <person name="Wallender E.K."/>
            <person name="Wong C."/>
            <person name="Yamamura Y."/>
            <person name="Yuan S."/>
            <person name="Shinozaki K."/>
            <person name="Davis R.W."/>
            <person name="Theologis A."/>
            <person name="Ecker J.R."/>
        </authorList>
    </citation>
    <scope>NUCLEOTIDE SEQUENCE [LARGE SCALE MRNA]</scope>
    <source>
        <strain>cv. Columbia</strain>
    </source>
</reference>
<protein>
    <recommendedName>
        <fullName>Cytochrome P450 71B28</fullName>
        <ecNumber>1.14.-.-</ecNumber>
    </recommendedName>
</protein>
<comment type="cofactor">
    <cofactor evidence="1">
        <name>heme</name>
        <dbReference type="ChEBI" id="CHEBI:30413"/>
    </cofactor>
</comment>
<comment type="subcellular location">
    <subcellularLocation>
        <location evidence="3">Membrane</location>
        <topology evidence="3">Single-pass membrane protein</topology>
    </subcellularLocation>
</comment>
<comment type="similarity">
    <text evidence="3">Belongs to the cytochrome P450 family.</text>
</comment>
<sequence>MSVFLCFLCLLPLILIFLKNLKPSKWKLPPGPKKLPIIGNLHQRRELHPRNSRNLSEKYGPIVFLRYGFVPVVVISSKEAAEEVLKTHDLECCSRPETVGTRAISYNFKDIGFAPYGEDWRTMRKLSVVELFSSKKLQSFRYIREEENDLCVKKLSDLASRRSLVNLEKTLFTLVGSIVCRIGFGINLRECEFVDEDSIDDLVHKSEDVIRNSIFSDFFPGLMGRLIEWIFSERKRLNRLYSEVDTFFQNILDDHLKPGRESSDIIDVMIDMMKKQEKEGDSFKFTTDHLKGMISDIFLAGVGTSSTTLIWAMTELIRNPRVMKKVQDEIRTTLGDKKERITEEDLNQLHYFKLMVKEIFRLHPAAPLLLPRETLSHVKIQGYDIPAKTQIMINAYAIARDPKLWTNPDEFNPDRFLDSSIDYRGLNFELLPFGSGRRICPGMTMGIAIVELGLLNLLYFFDWGLPEKEEAKEIITGNEVALDLVQVFLH</sequence>
<keyword id="KW-0349">Heme</keyword>
<keyword id="KW-0408">Iron</keyword>
<keyword id="KW-0472">Membrane</keyword>
<keyword id="KW-0479">Metal-binding</keyword>
<keyword id="KW-0503">Monooxygenase</keyword>
<keyword id="KW-0560">Oxidoreductase</keyword>
<keyword id="KW-1185">Reference proteome</keyword>
<keyword id="KW-0812">Transmembrane</keyword>
<keyword id="KW-1133">Transmembrane helix</keyword>
<organism>
    <name type="scientific">Arabidopsis thaliana</name>
    <name type="common">Mouse-ear cress</name>
    <dbReference type="NCBI Taxonomy" id="3702"/>
    <lineage>
        <taxon>Eukaryota</taxon>
        <taxon>Viridiplantae</taxon>
        <taxon>Streptophyta</taxon>
        <taxon>Embryophyta</taxon>
        <taxon>Tracheophyta</taxon>
        <taxon>Spermatophyta</taxon>
        <taxon>Magnoliopsida</taxon>
        <taxon>eudicotyledons</taxon>
        <taxon>Gunneridae</taxon>
        <taxon>Pentapetalae</taxon>
        <taxon>rosids</taxon>
        <taxon>malvids</taxon>
        <taxon>Brassicales</taxon>
        <taxon>Brassicaceae</taxon>
        <taxon>Camelineae</taxon>
        <taxon>Arabidopsis</taxon>
    </lineage>
</organism>